<comment type="function">
    <text>Part of the binding-protein-dependent transport system for alpha-glucosides such as sucrose, maltose and trehalose. Probably responsible for the translocation of the substrate across the membrane.</text>
</comment>
<comment type="subcellular location">
    <subcellularLocation>
        <location evidence="1">Cell inner membrane</location>
        <topology evidence="2">Multi-pass membrane protein</topology>
    </subcellularLocation>
</comment>
<comment type="similarity">
    <text evidence="3">Belongs to the binding-protein-dependent transport system permease family. MalFG subfamily.</text>
</comment>
<comment type="sequence caution" evidence="3">
    <conflict type="erroneous initiation">
        <sequence resource="EMBL-CDS" id="AAD12049"/>
    </conflict>
</comment>
<keyword id="KW-0997">Cell inner membrane</keyword>
<keyword id="KW-1003">Cell membrane</keyword>
<keyword id="KW-0472">Membrane</keyword>
<keyword id="KW-1185">Reference proteome</keyword>
<keyword id="KW-0762">Sugar transport</keyword>
<keyword id="KW-0812">Transmembrane</keyword>
<keyword id="KW-1133">Transmembrane helix</keyword>
<keyword id="KW-0813">Transport</keyword>
<reference key="1">
    <citation type="journal article" date="1999" name="J. Bacteriol.">
        <title>A novel Sinorhizobium meliloti operon encodes an alpha-glucosidase and a periplasmic-binding-protein-dependent transport system for alpha-glucosides.</title>
        <authorList>
            <person name="Willis L.B."/>
            <person name="Walker G.C."/>
        </authorList>
    </citation>
    <scope>NUCLEOTIDE SEQUENCE [GENOMIC DNA]</scope>
    <source>
        <strain>1021</strain>
    </source>
</reference>
<reference key="2">
    <citation type="journal article" date="2001" name="Proc. Natl. Acad. Sci. U.S.A.">
        <title>Analysis of the chromosome sequence of the legume symbiont Sinorhizobium meliloti strain 1021.</title>
        <authorList>
            <person name="Capela D."/>
            <person name="Barloy-Hubler F."/>
            <person name="Gouzy J."/>
            <person name="Bothe G."/>
            <person name="Ampe F."/>
            <person name="Batut J."/>
            <person name="Boistard P."/>
            <person name="Becker A."/>
            <person name="Boutry M."/>
            <person name="Cadieu E."/>
            <person name="Dreano S."/>
            <person name="Gloux S."/>
            <person name="Godrie T."/>
            <person name="Goffeau A."/>
            <person name="Kahn D."/>
            <person name="Kiss E."/>
            <person name="Lelaure V."/>
            <person name="Masuy D."/>
            <person name="Pohl T."/>
            <person name="Portetelle D."/>
            <person name="Puehler A."/>
            <person name="Purnelle B."/>
            <person name="Ramsperger U."/>
            <person name="Renard C."/>
            <person name="Thebault P."/>
            <person name="Vandenbol M."/>
            <person name="Weidner S."/>
            <person name="Galibert F."/>
        </authorList>
    </citation>
    <scope>NUCLEOTIDE SEQUENCE [LARGE SCALE GENOMIC DNA]</scope>
    <source>
        <strain>1021</strain>
    </source>
</reference>
<reference key="3">
    <citation type="journal article" date="2001" name="Science">
        <title>The composite genome of the legume symbiont Sinorhizobium meliloti.</title>
        <authorList>
            <person name="Galibert F."/>
            <person name="Finan T.M."/>
            <person name="Long S.R."/>
            <person name="Puehler A."/>
            <person name="Abola P."/>
            <person name="Ampe F."/>
            <person name="Barloy-Hubler F."/>
            <person name="Barnett M.J."/>
            <person name="Becker A."/>
            <person name="Boistard P."/>
            <person name="Bothe G."/>
            <person name="Boutry M."/>
            <person name="Bowser L."/>
            <person name="Buhrmester J."/>
            <person name="Cadieu E."/>
            <person name="Capela D."/>
            <person name="Chain P."/>
            <person name="Cowie A."/>
            <person name="Davis R.W."/>
            <person name="Dreano S."/>
            <person name="Federspiel N.A."/>
            <person name="Fisher R.F."/>
            <person name="Gloux S."/>
            <person name="Godrie T."/>
            <person name="Goffeau A."/>
            <person name="Golding B."/>
            <person name="Gouzy J."/>
            <person name="Gurjal M."/>
            <person name="Hernandez-Lucas I."/>
            <person name="Hong A."/>
            <person name="Huizar L."/>
            <person name="Hyman R.W."/>
            <person name="Jones T."/>
            <person name="Kahn D."/>
            <person name="Kahn M.L."/>
            <person name="Kalman S."/>
            <person name="Keating D.H."/>
            <person name="Kiss E."/>
            <person name="Komp C."/>
            <person name="Lelaure V."/>
            <person name="Masuy D."/>
            <person name="Palm C."/>
            <person name="Peck M.C."/>
            <person name="Pohl T.M."/>
            <person name="Portetelle D."/>
            <person name="Purnelle B."/>
            <person name="Ramsperger U."/>
            <person name="Surzycki R."/>
            <person name="Thebault P."/>
            <person name="Vandenbol M."/>
            <person name="Vorhoelter F.J."/>
            <person name="Weidner S."/>
            <person name="Wells D.H."/>
            <person name="Wong K."/>
            <person name="Yeh K.-C."/>
            <person name="Batut J."/>
        </authorList>
    </citation>
    <scope>NUCLEOTIDE SEQUENCE [LARGE SCALE GENOMIC DNA]</scope>
    <source>
        <strain>1021</strain>
    </source>
</reference>
<dbReference type="EMBL" id="AF045609">
    <property type="protein sequence ID" value="AAD12049.1"/>
    <property type="status" value="ALT_INIT"/>
    <property type="molecule type" value="Genomic_DNA"/>
</dbReference>
<dbReference type="EMBL" id="AL591688">
    <property type="protein sequence ID" value="CAC45268.1"/>
    <property type="molecule type" value="Genomic_DNA"/>
</dbReference>
<dbReference type="RefSeq" id="NP_384802.1">
    <property type="nucleotide sequence ID" value="NC_003047.1"/>
</dbReference>
<dbReference type="RefSeq" id="WP_003529835.1">
    <property type="nucleotide sequence ID" value="NC_003047.1"/>
</dbReference>
<dbReference type="SMR" id="Q9Z3R6"/>
<dbReference type="TCDB" id="3.A.1.1.8">
    <property type="family name" value="the atp-binding cassette (abc) superfamily"/>
</dbReference>
<dbReference type="EnsemblBacteria" id="CAC45268">
    <property type="protein sequence ID" value="CAC45268"/>
    <property type="gene ID" value="SMc03062"/>
</dbReference>
<dbReference type="KEGG" id="sme:SMc03062"/>
<dbReference type="PATRIC" id="fig|266834.11.peg.2071"/>
<dbReference type="eggNOG" id="COG1175">
    <property type="taxonomic scope" value="Bacteria"/>
</dbReference>
<dbReference type="HOGENOM" id="CLU_016047_0_0_5"/>
<dbReference type="OrthoDB" id="9805974at2"/>
<dbReference type="BRENDA" id="7.5.2.B9">
    <property type="organism ID" value="5347"/>
</dbReference>
<dbReference type="Proteomes" id="UP000001976">
    <property type="component" value="Chromosome"/>
</dbReference>
<dbReference type="GO" id="GO:0005886">
    <property type="term" value="C:plasma membrane"/>
    <property type="evidence" value="ECO:0007669"/>
    <property type="project" value="UniProtKB-SubCell"/>
</dbReference>
<dbReference type="GO" id="GO:0055085">
    <property type="term" value="P:transmembrane transport"/>
    <property type="evidence" value="ECO:0007669"/>
    <property type="project" value="InterPro"/>
</dbReference>
<dbReference type="CDD" id="cd06261">
    <property type="entry name" value="TM_PBP2"/>
    <property type="match status" value="1"/>
</dbReference>
<dbReference type="Gene3D" id="1.10.3720.10">
    <property type="entry name" value="MetI-like"/>
    <property type="match status" value="1"/>
</dbReference>
<dbReference type="InterPro" id="IPR051393">
    <property type="entry name" value="ABC_transporter_permease"/>
</dbReference>
<dbReference type="InterPro" id="IPR000515">
    <property type="entry name" value="MetI-like"/>
</dbReference>
<dbReference type="InterPro" id="IPR035906">
    <property type="entry name" value="MetI-like_sf"/>
</dbReference>
<dbReference type="PANTHER" id="PTHR30193">
    <property type="entry name" value="ABC TRANSPORTER PERMEASE PROTEIN"/>
    <property type="match status" value="1"/>
</dbReference>
<dbReference type="PANTHER" id="PTHR30193:SF18">
    <property type="entry name" value="OSMOPROTECTIVE COMPOUNDS UPTAKE PERMEASE PROTEIN GGTC"/>
    <property type="match status" value="1"/>
</dbReference>
<dbReference type="Pfam" id="PF00528">
    <property type="entry name" value="BPD_transp_1"/>
    <property type="match status" value="1"/>
</dbReference>
<dbReference type="SUPFAM" id="SSF160964">
    <property type="entry name" value="MalF N-terminal region-like"/>
    <property type="match status" value="1"/>
</dbReference>
<dbReference type="SUPFAM" id="SSF161098">
    <property type="entry name" value="MetI-like"/>
    <property type="match status" value="1"/>
</dbReference>
<dbReference type="PROSITE" id="PS50928">
    <property type="entry name" value="ABC_TM1"/>
    <property type="match status" value="1"/>
</dbReference>
<accession>Q9Z3R6</accession>
<protein>
    <recommendedName>
        <fullName>Alpha-glucoside transport system permease protein AglF</fullName>
    </recommendedName>
</protein>
<sequence>MEQLIAAILTMVAGVLVCAAYFWSTNLVLDWIFPSKGKFGAVASRNLRIANSIRPWLFLAPALLALTLYLVYPVVQSVWLSLHGRGGQNFVGLSNYSWMINDGEFRQSIFNNFLWLLVVPALSTFFGLIIAALTDRIWWGNIAKTLIFMPMAISFVGAAVIWKFIYDYRAAGSEQIGLLNAIVVALGGEPQAWITLPFWNNFFLMVILIWIQTGFAMVILSAALRGIPEETIEAAVIDGANGWQIFFKIMVPQIWGTIAVVWTTITILVLKVFDIVLAMTNGQWQSQVLANLMFDWMFRGGGDFGRGAAIAVVIMILVVPIMIWNIRNATRESGGH</sequence>
<name>AGLF_RHIME</name>
<gene>
    <name type="primary">aglF</name>
    <name type="ordered locus">R00696</name>
    <name type="ORF">SMc03062</name>
</gene>
<evidence type="ECO:0000250" key="1"/>
<evidence type="ECO:0000255" key="2">
    <source>
        <dbReference type="PROSITE-ProRule" id="PRU00441"/>
    </source>
</evidence>
<evidence type="ECO:0000305" key="3"/>
<proteinExistence type="inferred from homology"/>
<feature type="chain" id="PRO_0000059940" description="Alpha-glucoside transport system permease protein AglF">
    <location>
        <begin position="1"/>
        <end position="336"/>
    </location>
</feature>
<feature type="transmembrane region" description="Helical" evidence="2">
    <location>
        <begin position="4"/>
        <end position="24"/>
    </location>
</feature>
<feature type="transmembrane region" description="Helical" evidence="2">
    <location>
        <begin position="55"/>
        <end position="75"/>
    </location>
</feature>
<feature type="transmembrane region" description="Helical" evidence="2">
    <location>
        <begin position="113"/>
        <end position="133"/>
    </location>
</feature>
<feature type="transmembrane region" description="Helical" evidence="2">
    <location>
        <begin position="146"/>
        <end position="166"/>
    </location>
</feature>
<feature type="transmembrane region" description="Helical" evidence="2">
    <location>
        <begin position="176"/>
        <end position="196"/>
    </location>
</feature>
<feature type="transmembrane region" description="Helical" evidence="2">
    <location>
        <begin position="202"/>
        <end position="222"/>
    </location>
</feature>
<feature type="transmembrane region" description="Helical" evidence="2">
    <location>
        <begin position="258"/>
        <end position="278"/>
    </location>
</feature>
<feature type="transmembrane region" description="Helical" evidence="2">
    <location>
        <begin position="304"/>
        <end position="324"/>
    </location>
</feature>
<feature type="domain" description="ABC transmembrane type-1" evidence="2">
    <location>
        <begin position="109"/>
        <end position="325"/>
    </location>
</feature>
<feature type="sequence conflict" description="In Ref. 1; AAD12049." evidence="3" ref="1">
    <original>IL</original>
    <variation>NP</variation>
    <location>
        <begin position="316"/>
        <end position="317"/>
    </location>
</feature>
<organism>
    <name type="scientific">Rhizobium meliloti (strain 1021)</name>
    <name type="common">Ensifer meliloti</name>
    <name type="synonym">Sinorhizobium meliloti</name>
    <dbReference type="NCBI Taxonomy" id="266834"/>
    <lineage>
        <taxon>Bacteria</taxon>
        <taxon>Pseudomonadati</taxon>
        <taxon>Pseudomonadota</taxon>
        <taxon>Alphaproteobacteria</taxon>
        <taxon>Hyphomicrobiales</taxon>
        <taxon>Rhizobiaceae</taxon>
        <taxon>Sinorhizobium/Ensifer group</taxon>
        <taxon>Sinorhizobium</taxon>
    </lineage>
</organism>